<keyword id="KW-0963">Cytoplasm</keyword>
<keyword id="KW-0460">Magnesium</keyword>
<keyword id="KW-0479">Metal-binding</keyword>
<keyword id="KW-0548">Nucleotidyltransferase</keyword>
<keyword id="KW-0694">RNA-binding</keyword>
<keyword id="KW-0808">Transferase</keyword>
<proteinExistence type="inferred from homology"/>
<gene>
    <name evidence="1" type="primary">pnp</name>
    <name type="ordered locus">HSM_1114</name>
</gene>
<organism>
    <name type="scientific">Histophilus somni (strain 2336)</name>
    <name type="common">Haemophilus somnus</name>
    <dbReference type="NCBI Taxonomy" id="228400"/>
    <lineage>
        <taxon>Bacteria</taxon>
        <taxon>Pseudomonadati</taxon>
        <taxon>Pseudomonadota</taxon>
        <taxon>Gammaproteobacteria</taxon>
        <taxon>Pasteurellales</taxon>
        <taxon>Pasteurellaceae</taxon>
        <taxon>Histophilus</taxon>
    </lineage>
</organism>
<protein>
    <recommendedName>
        <fullName evidence="1">Polyribonucleotide nucleotidyltransferase</fullName>
        <ecNumber evidence="1">2.7.7.8</ecNumber>
    </recommendedName>
    <alternativeName>
        <fullName evidence="1">Polynucleotide phosphorylase</fullName>
        <shortName evidence="1">PNPase</shortName>
    </alternativeName>
</protein>
<reference key="1">
    <citation type="submission" date="2008-02" db="EMBL/GenBank/DDBJ databases">
        <title>Complete sequence of Haemophilus somnus 2336.</title>
        <authorList>
            <consortium name="US DOE Joint Genome Institute"/>
            <person name="Siddaramappa S."/>
            <person name="Duncan A.J."/>
            <person name="Challacombe J.F."/>
            <person name="Rainey D."/>
            <person name="Gillaspy A.F."/>
            <person name="Carson M."/>
            <person name="Gipson J."/>
            <person name="Gipson M."/>
            <person name="Bruce D."/>
            <person name="Detter J.C."/>
            <person name="Han C.S."/>
            <person name="Land M."/>
            <person name="Tapia R."/>
            <person name="Thompson L.S."/>
            <person name="Orvis J."/>
            <person name="Zaitshik J."/>
            <person name="Barnes G."/>
            <person name="Brettin T.S."/>
            <person name="Dyer D.W."/>
            <person name="Inzana T.J."/>
        </authorList>
    </citation>
    <scope>NUCLEOTIDE SEQUENCE [LARGE SCALE GENOMIC DNA]</scope>
    <source>
        <strain>2336</strain>
    </source>
</reference>
<name>PNP_HISS2</name>
<dbReference type="EC" id="2.7.7.8" evidence="1"/>
<dbReference type="EMBL" id="CP000947">
    <property type="protein sequence ID" value="ACA30834.1"/>
    <property type="molecule type" value="Genomic_DNA"/>
</dbReference>
<dbReference type="RefSeq" id="WP_011608859.1">
    <property type="nucleotide sequence ID" value="NC_010519.1"/>
</dbReference>
<dbReference type="SMR" id="B0UTJ5"/>
<dbReference type="STRING" id="228400.HSM_1114"/>
<dbReference type="GeneID" id="31487414"/>
<dbReference type="KEGG" id="hsm:HSM_1114"/>
<dbReference type="HOGENOM" id="CLU_004217_2_2_6"/>
<dbReference type="GO" id="GO:0005829">
    <property type="term" value="C:cytosol"/>
    <property type="evidence" value="ECO:0007669"/>
    <property type="project" value="TreeGrafter"/>
</dbReference>
<dbReference type="GO" id="GO:0000175">
    <property type="term" value="F:3'-5'-RNA exonuclease activity"/>
    <property type="evidence" value="ECO:0007669"/>
    <property type="project" value="TreeGrafter"/>
</dbReference>
<dbReference type="GO" id="GO:0000287">
    <property type="term" value="F:magnesium ion binding"/>
    <property type="evidence" value="ECO:0007669"/>
    <property type="project" value="UniProtKB-UniRule"/>
</dbReference>
<dbReference type="GO" id="GO:0004654">
    <property type="term" value="F:polyribonucleotide nucleotidyltransferase activity"/>
    <property type="evidence" value="ECO:0007669"/>
    <property type="project" value="UniProtKB-UniRule"/>
</dbReference>
<dbReference type="GO" id="GO:0003723">
    <property type="term" value="F:RNA binding"/>
    <property type="evidence" value="ECO:0007669"/>
    <property type="project" value="UniProtKB-UniRule"/>
</dbReference>
<dbReference type="GO" id="GO:0006402">
    <property type="term" value="P:mRNA catabolic process"/>
    <property type="evidence" value="ECO:0007669"/>
    <property type="project" value="UniProtKB-UniRule"/>
</dbReference>
<dbReference type="GO" id="GO:0006396">
    <property type="term" value="P:RNA processing"/>
    <property type="evidence" value="ECO:0007669"/>
    <property type="project" value="InterPro"/>
</dbReference>
<dbReference type="CDD" id="cd02393">
    <property type="entry name" value="KH-I_PNPase"/>
    <property type="match status" value="1"/>
</dbReference>
<dbReference type="CDD" id="cd11363">
    <property type="entry name" value="RNase_PH_PNPase_1"/>
    <property type="match status" value="1"/>
</dbReference>
<dbReference type="CDD" id="cd11364">
    <property type="entry name" value="RNase_PH_PNPase_2"/>
    <property type="match status" value="1"/>
</dbReference>
<dbReference type="CDD" id="cd04472">
    <property type="entry name" value="S1_PNPase"/>
    <property type="match status" value="1"/>
</dbReference>
<dbReference type="FunFam" id="2.40.50.140:FF:000023">
    <property type="entry name" value="Polyribonucleotide nucleotidyltransferase"/>
    <property type="match status" value="1"/>
</dbReference>
<dbReference type="FunFam" id="3.30.1370.10:FF:000001">
    <property type="entry name" value="Polyribonucleotide nucleotidyltransferase"/>
    <property type="match status" value="1"/>
</dbReference>
<dbReference type="FunFam" id="3.30.230.70:FF:000001">
    <property type="entry name" value="Polyribonucleotide nucleotidyltransferase"/>
    <property type="match status" value="1"/>
</dbReference>
<dbReference type="FunFam" id="3.30.230.70:FF:000002">
    <property type="entry name" value="Polyribonucleotide nucleotidyltransferase"/>
    <property type="match status" value="1"/>
</dbReference>
<dbReference type="Gene3D" id="3.30.230.70">
    <property type="entry name" value="GHMP Kinase, N-terminal domain"/>
    <property type="match status" value="2"/>
</dbReference>
<dbReference type="Gene3D" id="3.30.1370.10">
    <property type="entry name" value="K Homology domain, type 1"/>
    <property type="match status" value="1"/>
</dbReference>
<dbReference type="Gene3D" id="2.40.50.140">
    <property type="entry name" value="Nucleic acid-binding proteins"/>
    <property type="match status" value="1"/>
</dbReference>
<dbReference type="HAMAP" id="MF_01595">
    <property type="entry name" value="PNPase"/>
    <property type="match status" value="1"/>
</dbReference>
<dbReference type="InterPro" id="IPR001247">
    <property type="entry name" value="ExoRNase_PH_dom1"/>
</dbReference>
<dbReference type="InterPro" id="IPR015847">
    <property type="entry name" value="ExoRNase_PH_dom2"/>
</dbReference>
<dbReference type="InterPro" id="IPR036345">
    <property type="entry name" value="ExoRNase_PH_dom2_sf"/>
</dbReference>
<dbReference type="InterPro" id="IPR004087">
    <property type="entry name" value="KH_dom"/>
</dbReference>
<dbReference type="InterPro" id="IPR004088">
    <property type="entry name" value="KH_dom_type_1"/>
</dbReference>
<dbReference type="InterPro" id="IPR036612">
    <property type="entry name" value="KH_dom_type_1_sf"/>
</dbReference>
<dbReference type="InterPro" id="IPR012340">
    <property type="entry name" value="NA-bd_OB-fold"/>
</dbReference>
<dbReference type="InterPro" id="IPR012162">
    <property type="entry name" value="PNPase"/>
</dbReference>
<dbReference type="InterPro" id="IPR027408">
    <property type="entry name" value="PNPase/RNase_PH_dom_sf"/>
</dbReference>
<dbReference type="InterPro" id="IPR015848">
    <property type="entry name" value="PNPase_PH_RNA-bd_bac/org-type"/>
</dbReference>
<dbReference type="InterPro" id="IPR020568">
    <property type="entry name" value="Ribosomal_Su5_D2-typ_SF"/>
</dbReference>
<dbReference type="InterPro" id="IPR003029">
    <property type="entry name" value="S1_domain"/>
</dbReference>
<dbReference type="NCBIfam" id="TIGR03591">
    <property type="entry name" value="polynuc_phos"/>
    <property type="match status" value="1"/>
</dbReference>
<dbReference type="NCBIfam" id="NF008805">
    <property type="entry name" value="PRK11824.1"/>
    <property type="match status" value="1"/>
</dbReference>
<dbReference type="PANTHER" id="PTHR11252">
    <property type="entry name" value="POLYRIBONUCLEOTIDE NUCLEOTIDYLTRANSFERASE"/>
    <property type="match status" value="1"/>
</dbReference>
<dbReference type="PANTHER" id="PTHR11252:SF0">
    <property type="entry name" value="POLYRIBONUCLEOTIDE NUCLEOTIDYLTRANSFERASE 1, MITOCHONDRIAL"/>
    <property type="match status" value="1"/>
</dbReference>
<dbReference type="Pfam" id="PF00013">
    <property type="entry name" value="KH_1"/>
    <property type="match status" value="1"/>
</dbReference>
<dbReference type="Pfam" id="PF03726">
    <property type="entry name" value="PNPase"/>
    <property type="match status" value="1"/>
</dbReference>
<dbReference type="Pfam" id="PF01138">
    <property type="entry name" value="RNase_PH"/>
    <property type="match status" value="2"/>
</dbReference>
<dbReference type="Pfam" id="PF03725">
    <property type="entry name" value="RNase_PH_C"/>
    <property type="match status" value="2"/>
</dbReference>
<dbReference type="Pfam" id="PF00575">
    <property type="entry name" value="S1"/>
    <property type="match status" value="1"/>
</dbReference>
<dbReference type="PIRSF" id="PIRSF005499">
    <property type="entry name" value="PNPase"/>
    <property type="match status" value="1"/>
</dbReference>
<dbReference type="SMART" id="SM00322">
    <property type="entry name" value="KH"/>
    <property type="match status" value="1"/>
</dbReference>
<dbReference type="SMART" id="SM00316">
    <property type="entry name" value="S1"/>
    <property type="match status" value="1"/>
</dbReference>
<dbReference type="SUPFAM" id="SSF54791">
    <property type="entry name" value="Eukaryotic type KH-domain (KH-domain type I)"/>
    <property type="match status" value="1"/>
</dbReference>
<dbReference type="SUPFAM" id="SSF50249">
    <property type="entry name" value="Nucleic acid-binding proteins"/>
    <property type="match status" value="1"/>
</dbReference>
<dbReference type="SUPFAM" id="SSF55666">
    <property type="entry name" value="Ribonuclease PH domain 2-like"/>
    <property type="match status" value="2"/>
</dbReference>
<dbReference type="SUPFAM" id="SSF54211">
    <property type="entry name" value="Ribosomal protein S5 domain 2-like"/>
    <property type="match status" value="2"/>
</dbReference>
<dbReference type="PROSITE" id="PS50084">
    <property type="entry name" value="KH_TYPE_1"/>
    <property type="match status" value="1"/>
</dbReference>
<dbReference type="PROSITE" id="PS50126">
    <property type="entry name" value="S1"/>
    <property type="match status" value="1"/>
</dbReference>
<feature type="chain" id="PRO_1000087990" description="Polyribonucleotide nucleotidyltransferase">
    <location>
        <begin position="1"/>
        <end position="713"/>
    </location>
</feature>
<feature type="domain" description="KH" evidence="1">
    <location>
        <begin position="552"/>
        <end position="611"/>
    </location>
</feature>
<feature type="domain" description="S1 motif" evidence="1">
    <location>
        <begin position="621"/>
        <end position="689"/>
    </location>
</feature>
<feature type="region of interest" description="Disordered" evidence="2">
    <location>
        <begin position="694"/>
        <end position="713"/>
    </location>
</feature>
<feature type="compositionally biased region" description="Polar residues" evidence="2">
    <location>
        <begin position="701"/>
        <end position="713"/>
    </location>
</feature>
<feature type="binding site" evidence="1">
    <location>
        <position position="485"/>
    </location>
    <ligand>
        <name>Mg(2+)</name>
        <dbReference type="ChEBI" id="CHEBI:18420"/>
    </ligand>
</feature>
<feature type="binding site" evidence="1">
    <location>
        <position position="491"/>
    </location>
    <ligand>
        <name>Mg(2+)</name>
        <dbReference type="ChEBI" id="CHEBI:18420"/>
    </ligand>
</feature>
<sequence>MNPIVKQFKYGQHTVTLETGAIARQATAAVMASMDDTSVFVTVVAKKDVKEGQDFFPLTVNYQERTYAAGRIPGGFFKREGRPSEGETLIARLIDRPIRPLFPEGFFNEIQIIATVVSVNPQISPDLVAMIGASAALSLSGVPFNGPIGAARVGFINDQFVLNPTMNEQKQSRLDLVVAGTDKAVLMVESEADILTEEQMLAAVVFGHQQQQIVIEAIKEFAAEAGKPRWDWTAPEANTILIEKVKSIAENRLGDAYRITEKQARYEQIDLIKADVITQVTAEDETISEGKIIDIFTALESQIVRGRILRGEPRIDGRTVDTVRALDICTGVLPRTHGSAIFTRGETQALAVATLGTERDAQIIDELTGEKTDHFLFHYNFPPYSVGETGMIGSPKRREIGHGRLAKRGVAAVMPSLSEFPYVVRVVSEITESNGSSSMASVCGASLALMDAGVPIKAAVAGIAMGLVKEEDNFVVLSDILGDEDHLGDMDFKVAGTREGVTALQMDIKIEGITAEIMQIALNQAKSARMHILGVMEQAIPAPRADISDFAPRIYTMKIDPKKIKDVIGKGGATVRSLTEETGTSIDIDDDGTVKIAAVDKNAVQEVMSRIEDITAEVEVGVVYKGKVTRLADFGAFVALVGNKEGLVHISQIAEERVEKVSDYLAIGQEVIVKVLEIDRQGRIRLTMKELAKDQTKNEENLLQSEEGSPVQE</sequence>
<evidence type="ECO:0000255" key="1">
    <source>
        <dbReference type="HAMAP-Rule" id="MF_01595"/>
    </source>
</evidence>
<evidence type="ECO:0000256" key="2">
    <source>
        <dbReference type="SAM" id="MobiDB-lite"/>
    </source>
</evidence>
<comment type="function">
    <text evidence="1">Involved in mRNA degradation. Catalyzes the phosphorolysis of single-stranded polyribonucleotides processively in the 3'- to 5'-direction.</text>
</comment>
<comment type="catalytic activity">
    <reaction evidence="1">
        <text>RNA(n+1) + phosphate = RNA(n) + a ribonucleoside 5'-diphosphate</text>
        <dbReference type="Rhea" id="RHEA:22096"/>
        <dbReference type="Rhea" id="RHEA-COMP:14527"/>
        <dbReference type="Rhea" id="RHEA-COMP:17342"/>
        <dbReference type="ChEBI" id="CHEBI:43474"/>
        <dbReference type="ChEBI" id="CHEBI:57930"/>
        <dbReference type="ChEBI" id="CHEBI:140395"/>
        <dbReference type="EC" id="2.7.7.8"/>
    </reaction>
</comment>
<comment type="cofactor">
    <cofactor evidence="1">
        <name>Mg(2+)</name>
        <dbReference type="ChEBI" id="CHEBI:18420"/>
    </cofactor>
</comment>
<comment type="subunit">
    <text evidence="1">Component of the RNA degradosome, which is a multiprotein complex involved in RNA processing and mRNA degradation.</text>
</comment>
<comment type="subcellular location">
    <subcellularLocation>
        <location evidence="1">Cytoplasm</location>
    </subcellularLocation>
</comment>
<comment type="similarity">
    <text evidence="1">Belongs to the polyribonucleotide nucleotidyltransferase family.</text>
</comment>
<accession>B0UTJ5</accession>